<dbReference type="EC" id="3.1.13.1"/>
<dbReference type="EMBL" id="BA000003">
    <property type="protein sequence ID" value="BAB12976.1"/>
    <property type="molecule type" value="Genomic_DNA"/>
</dbReference>
<dbReference type="RefSeq" id="NP_240090.1">
    <property type="nucleotide sequence ID" value="NC_002528.1"/>
</dbReference>
<dbReference type="RefSeq" id="WP_010896034.1">
    <property type="nucleotide sequence ID" value="NC_002528.1"/>
</dbReference>
<dbReference type="SMR" id="P57354"/>
<dbReference type="STRING" id="563178.BUAP5A_261"/>
<dbReference type="EnsemblBacteria" id="BAB12976">
    <property type="protein sequence ID" value="BAB12976"/>
    <property type="gene ID" value="BAB12976"/>
</dbReference>
<dbReference type="KEGG" id="buc:BU266"/>
<dbReference type="PATRIC" id="fig|107806.10.peg.276"/>
<dbReference type="eggNOG" id="COG4776">
    <property type="taxonomic scope" value="Bacteria"/>
</dbReference>
<dbReference type="HOGENOM" id="CLU_002333_7_3_6"/>
<dbReference type="Proteomes" id="UP000001806">
    <property type="component" value="Chromosome"/>
</dbReference>
<dbReference type="GO" id="GO:0005829">
    <property type="term" value="C:cytosol"/>
    <property type="evidence" value="ECO:0007669"/>
    <property type="project" value="UniProtKB-ARBA"/>
</dbReference>
<dbReference type="GO" id="GO:0008859">
    <property type="term" value="F:exoribonuclease II activity"/>
    <property type="evidence" value="ECO:0007669"/>
    <property type="project" value="UniProtKB-UniRule"/>
</dbReference>
<dbReference type="GO" id="GO:0003723">
    <property type="term" value="F:RNA binding"/>
    <property type="evidence" value="ECO:0007669"/>
    <property type="project" value="UniProtKB-KW"/>
</dbReference>
<dbReference type="GO" id="GO:0006402">
    <property type="term" value="P:mRNA catabolic process"/>
    <property type="evidence" value="ECO:0007669"/>
    <property type="project" value="UniProtKB-UniRule"/>
</dbReference>
<dbReference type="Gene3D" id="2.40.50.640">
    <property type="match status" value="1"/>
</dbReference>
<dbReference type="Gene3D" id="2.40.50.140">
    <property type="entry name" value="Nucleic acid-binding proteins"/>
    <property type="match status" value="2"/>
</dbReference>
<dbReference type="HAMAP" id="MF_01036">
    <property type="entry name" value="RNase_II"/>
    <property type="match status" value="1"/>
</dbReference>
<dbReference type="InterPro" id="IPR011129">
    <property type="entry name" value="CSD"/>
</dbReference>
<dbReference type="InterPro" id="IPR012340">
    <property type="entry name" value="NA-bd_OB-fold"/>
</dbReference>
<dbReference type="InterPro" id="IPR013223">
    <property type="entry name" value="RNase_B_OB_dom"/>
</dbReference>
<dbReference type="InterPro" id="IPR011804">
    <property type="entry name" value="RNase_II"/>
</dbReference>
<dbReference type="InterPro" id="IPR001900">
    <property type="entry name" value="RNase_II/R"/>
</dbReference>
<dbReference type="InterPro" id="IPR022966">
    <property type="entry name" value="RNase_II/R_CS"/>
</dbReference>
<dbReference type="InterPro" id="IPR004476">
    <property type="entry name" value="RNase_II/RNase_R"/>
</dbReference>
<dbReference type="InterPro" id="IPR050180">
    <property type="entry name" value="RNR_Ribonuclease"/>
</dbReference>
<dbReference type="NCBIfam" id="TIGR00358">
    <property type="entry name" value="3_prime_RNase"/>
    <property type="match status" value="1"/>
</dbReference>
<dbReference type="NCBIfam" id="NF003455">
    <property type="entry name" value="PRK05054.1"/>
    <property type="match status" value="1"/>
</dbReference>
<dbReference type="NCBIfam" id="TIGR02062">
    <property type="entry name" value="RNase_B"/>
    <property type="match status" value="1"/>
</dbReference>
<dbReference type="PANTHER" id="PTHR23355:SF37">
    <property type="entry name" value="EXORIBONUCLEASE 2"/>
    <property type="match status" value="1"/>
</dbReference>
<dbReference type="PANTHER" id="PTHR23355">
    <property type="entry name" value="RIBONUCLEASE"/>
    <property type="match status" value="1"/>
</dbReference>
<dbReference type="Pfam" id="PF08206">
    <property type="entry name" value="OB_RNB"/>
    <property type="match status" value="1"/>
</dbReference>
<dbReference type="Pfam" id="PF00773">
    <property type="entry name" value="RNB"/>
    <property type="match status" value="1"/>
</dbReference>
<dbReference type="SMART" id="SM00357">
    <property type="entry name" value="CSP"/>
    <property type="match status" value="1"/>
</dbReference>
<dbReference type="SMART" id="SM00955">
    <property type="entry name" value="RNB"/>
    <property type="match status" value="1"/>
</dbReference>
<dbReference type="SUPFAM" id="SSF50249">
    <property type="entry name" value="Nucleic acid-binding proteins"/>
    <property type="match status" value="4"/>
</dbReference>
<dbReference type="PROSITE" id="PS01175">
    <property type="entry name" value="RIBONUCLEASE_II"/>
    <property type="match status" value="1"/>
</dbReference>
<reference key="1">
    <citation type="journal article" date="2000" name="Nature">
        <title>Genome sequence of the endocellular bacterial symbiont of aphids Buchnera sp. APS.</title>
        <authorList>
            <person name="Shigenobu S."/>
            <person name="Watanabe H."/>
            <person name="Hattori M."/>
            <person name="Sakaki Y."/>
            <person name="Ishikawa H."/>
        </authorList>
    </citation>
    <scope>NUCLEOTIDE SEQUENCE [LARGE SCALE GENOMIC DNA]</scope>
    <source>
        <strain>APS</strain>
    </source>
</reference>
<feature type="chain" id="PRO_0000166377" description="Exoribonuclease 2">
    <location>
        <begin position="1"/>
        <end position="649"/>
    </location>
</feature>
<feature type="domain" description="RNB" evidence="2">
    <location>
        <begin position="190"/>
        <end position="517"/>
    </location>
</feature>
<feature type="domain" description="S1 motif">
    <location>
        <begin position="562"/>
        <end position="644"/>
    </location>
</feature>
<evidence type="ECO:0000250" key="1"/>
<evidence type="ECO:0000255" key="2"/>
<evidence type="ECO:0000305" key="3"/>
<name>RNB_BUCAI</name>
<comment type="function">
    <text evidence="1">Involved in mRNA degradation. Hydrolyzes single-stranded polyribonucleotides processively in the 3' to 5' direction (By similarity).</text>
</comment>
<comment type="catalytic activity">
    <reaction>
        <text>Exonucleolytic cleavage in the 3'- to 5'-direction to yield nucleoside 5'-phosphates.</text>
        <dbReference type="EC" id="3.1.13.1"/>
    </reaction>
</comment>
<comment type="subcellular location">
    <subcellularLocation>
        <location evidence="1">Cytoplasm</location>
    </subcellularLocation>
</comment>
<comment type="similarity">
    <text evidence="3">Belongs to the RNR ribonuclease family. RNase II subfamily.</text>
</comment>
<accession>P57354</accession>
<organism>
    <name type="scientific">Buchnera aphidicola subsp. Acyrthosiphon pisum (strain APS)</name>
    <name type="common">Acyrthosiphon pisum symbiotic bacterium</name>
    <dbReference type="NCBI Taxonomy" id="107806"/>
    <lineage>
        <taxon>Bacteria</taxon>
        <taxon>Pseudomonadati</taxon>
        <taxon>Pseudomonadota</taxon>
        <taxon>Gammaproteobacteria</taxon>
        <taxon>Enterobacterales</taxon>
        <taxon>Erwiniaceae</taxon>
        <taxon>Buchnera</taxon>
    </lineage>
</organism>
<sequence length="649" mass="75144">MFQNNPLLTQLKKNLHAKSPRVEGIVKSTERGFGFLEVDPQKSYFIPPKNMKNVMHGDKIIALLTTEKDREIVEPEKLIEPFLNRFVGKIEKKDNRLFIVPDYPFLKDLITCQPNKNCINIFQNGDWAVAQLKKHKLKGDHLFYAELTEKITQEDDPLIPWWVTLARHDLDRKEPLAEDDDLILKESDNRKDLTDLDFITIDNTNTKDIDDALFVSEKNNGDISLIVAIADPTAYIKHGSKLDVIASKRIFTNYLPGFNIPMLPRNLSEDICSLNPNKRRPVLACHITVLKNGNISNKIEFFLAWIKSKSKLSYDHVSDWIEKIGSWIPPTKSIANQILILHRLCLLRIKWRKKNAVLFKDSIEYRFHVSEHGKIIDVLIEKRRIAHKIIEESMIVANISAANFLSKNIGFGIYNVHSGFDLVNAENAVSFLRSYNLNFTVKEITTLKGFCNLRRVLNIISNNYIDSRIRRFQSFGDFSTIPGPHFALGFSEYATWTSPIRKYSDMINHRLLKSIIKKEKSIKPGEDIKIKISEQRRRNRMAERDVLDWLYTIFLQKKKYQNQKFNAEITDISRSGIRARLIENGANVFIPGTLIHPIREELNFNQESGKVFINGIMHYKISDLIQVTLSDIRLKTRSIIAKPVFEKFK</sequence>
<protein>
    <recommendedName>
        <fullName>Exoribonuclease 2</fullName>
        <ecNumber>3.1.13.1</ecNumber>
    </recommendedName>
    <alternativeName>
        <fullName>Exoribonuclease II</fullName>
        <shortName>RNase II</shortName>
        <shortName>Ribonuclease II</shortName>
    </alternativeName>
</protein>
<proteinExistence type="inferred from homology"/>
<gene>
    <name type="primary">rnb</name>
    <name type="ordered locus">BU266</name>
</gene>
<keyword id="KW-0963">Cytoplasm</keyword>
<keyword id="KW-0269">Exonuclease</keyword>
<keyword id="KW-0378">Hydrolase</keyword>
<keyword id="KW-0540">Nuclease</keyword>
<keyword id="KW-1185">Reference proteome</keyword>
<keyword id="KW-0694">RNA-binding</keyword>